<sequence>MTIKSDKWIKKMSQEYNMIEPFEAGQIKVSNNQKIVSYGTSSYGYDVRCADEFKIFTNINSSIVDPKNFNDKNFVDFKGDVCIIPPNSFALARTVEKFKIPRDTLVVCLGKSTYARCGIIVNVTPLEPEWEGYVTLEFSNTTPLPAKIYANEGVAQMLFFQSDEECETSYADKGGKYQGQVGVTLPKC</sequence>
<dbReference type="EC" id="3.5.4.13" evidence="1"/>
<dbReference type="EMBL" id="CP000937">
    <property type="protein sequence ID" value="ABZ87964.1"/>
    <property type="molecule type" value="Genomic_DNA"/>
</dbReference>
<dbReference type="SMR" id="B0U0D4"/>
<dbReference type="KEGG" id="fph:Fphi_1739"/>
<dbReference type="eggNOG" id="COG0717">
    <property type="taxonomic scope" value="Bacteria"/>
</dbReference>
<dbReference type="HOGENOM" id="CLU_087476_4_0_6"/>
<dbReference type="UniPathway" id="UPA00610">
    <property type="reaction ID" value="UER00665"/>
</dbReference>
<dbReference type="GO" id="GO:0008829">
    <property type="term" value="F:dCTP deaminase activity"/>
    <property type="evidence" value="ECO:0007669"/>
    <property type="project" value="UniProtKB-UniRule"/>
</dbReference>
<dbReference type="GO" id="GO:0000166">
    <property type="term" value="F:nucleotide binding"/>
    <property type="evidence" value="ECO:0007669"/>
    <property type="project" value="UniProtKB-KW"/>
</dbReference>
<dbReference type="GO" id="GO:0006226">
    <property type="term" value="P:dUMP biosynthetic process"/>
    <property type="evidence" value="ECO:0007669"/>
    <property type="project" value="UniProtKB-UniPathway"/>
</dbReference>
<dbReference type="GO" id="GO:0006229">
    <property type="term" value="P:dUTP biosynthetic process"/>
    <property type="evidence" value="ECO:0007669"/>
    <property type="project" value="UniProtKB-UniRule"/>
</dbReference>
<dbReference type="GO" id="GO:0015949">
    <property type="term" value="P:nucleobase-containing small molecule interconversion"/>
    <property type="evidence" value="ECO:0007669"/>
    <property type="project" value="TreeGrafter"/>
</dbReference>
<dbReference type="CDD" id="cd07557">
    <property type="entry name" value="trimeric_dUTPase"/>
    <property type="match status" value="1"/>
</dbReference>
<dbReference type="FunFam" id="2.70.40.10:FF:000001">
    <property type="entry name" value="dCTP deaminase"/>
    <property type="match status" value="1"/>
</dbReference>
<dbReference type="Gene3D" id="2.70.40.10">
    <property type="match status" value="1"/>
</dbReference>
<dbReference type="HAMAP" id="MF_00146">
    <property type="entry name" value="dCTP_deaminase"/>
    <property type="match status" value="1"/>
</dbReference>
<dbReference type="InterPro" id="IPR011962">
    <property type="entry name" value="dCTP_deaminase"/>
</dbReference>
<dbReference type="InterPro" id="IPR036157">
    <property type="entry name" value="dUTPase-like_sf"/>
</dbReference>
<dbReference type="InterPro" id="IPR033704">
    <property type="entry name" value="dUTPase_trimeric"/>
</dbReference>
<dbReference type="NCBIfam" id="TIGR02274">
    <property type="entry name" value="dCTP_deam"/>
    <property type="match status" value="1"/>
</dbReference>
<dbReference type="PANTHER" id="PTHR42680">
    <property type="entry name" value="DCTP DEAMINASE"/>
    <property type="match status" value="1"/>
</dbReference>
<dbReference type="PANTHER" id="PTHR42680:SF3">
    <property type="entry name" value="DCTP DEAMINASE"/>
    <property type="match status" value="1"/>
</dbReference>
<dbReference type="Pfam" id="PF22769">
    <property type="entry name" value="DCD"/>
    <property type="match status" value="1"/>
</dbReference>
<dbReference type="SUPFAM" id="SSF51283">
    <property type="entry name" value="dUTPase-like"/>
    <property type="match status" value="1"/>
</dbReference>
<reference key="1">
    <citation type="submission" date="2007-12" db="EMBL/GenBank/DDBJ databases">
        <title>Complete sequence of chromosome of Francisella philomiragia subsp. philomiragia ATCC 25017.</title>
        <authorList>
            <consortium name="US DOE Joint Genome Institute"/>
            <person name="Copeland A."/>
            <person name="Lucas S."/>
            <person name="Lapidus A."/>
            <person name="Barry K."/>
            <person name="Detter J.C."/>
            <person name="Glavina del Rio T."/>
            <person name="Hammon N."/>
            <person name="Israni S."/>
            <person name="Dalin E."/>
            <person name="Tice H."/>
            <person name="Pitluck S."/>
            <person name="Chain P."/>
            <person name="Malfatti S."/>
            <person name="Shin M."/>
            <person name="Vergez L."/>
            <person name="Schmutz J."/>
            <person name="Larimer F."/>
            <person name="Land M."/>
            <person name="Hauser L."/>
            <person name="Richardson P."/>
        </authorList>
    </citation>
    <scope>NUCLEOTIDE SEQUENCE [LARGE SCALE GENOMIC DNA]</scope>
    <source>
        <strain>ATCC 25017 / CCUG 19701 / FSC 153 / O#319-036</strain>
    </source>
</reference>
<name>DCD_FRAP2</name>
<proteinExistence type="inferred from homology"/>
<comment type="function">
    <text evidence="1">Catalyzes the deamination of dCTP to dUTP.</text>
</comment>
<comment type="catalytic activity">
    <reaction evidence="1">
        <text>dCTP + H2O + H(+) = dUTP + NH4(+)</text>
        <dbReference type="Rhea" id="RHEA:22680"/>
        <dbReference type="ChEBI" id="CHEBI:15377"/>
        <dbReference type="ChEBI" id="CHEBI:15378"/>
        <dbReference type="ChEBI" id="CHEBI:28938"/>
        <dbReference type="ChEBI" id="CHEBI:61481"/>
        <dbReference type="ChEBI" id="CHEBI:61555"/>
        <dbReference type="EC" id="3.5.4.13"/>
    </reaction>
</comment>
<comment type="pathway">
    <text evidence="1">Pyrimidine metabolism; dUMP biosynthesis; dUMP from dCTP (dUTP route): step 1/2.</text>
</comment>
<comment type="subunit">
    <text evidence="1">Homotrimer.</text>
</comment>
<comment type="similarity">
    <text evidence="1">Belongs to the dCTP deaminase family.</text>
</comment>
<protein>
    <recommendedName>
        <fullName evidence="1">dCTP deaminase</fullName>
        <ecNumber evidence="1">3.5.4.13</ecNumber>
    </recommendedName>
    <alternativeName>
        <fullName evidence="1">Deoxycytidine triphosphate deaminase</fullName>
    </alternativeName>
</protein>
<evidence type="ECO:0000255" key="1">
    <source>
        <dbReference type="HAMAP-Rule" id="MF_00146"/>
    </source>
</evidence>
<feature type="chain" id="PRO_1000076619" description="dCTP deaminase">
    <location>
        <begin position="1"/>
        <end position="188"/>
    </location>
</feature>
<feature type="active site" description="Proton donor/acceptor" evidence="1">
    <location>
        <position position="137"/>
    </location>
</feature>
<feature type="binding site" evidence="1">
    <location>
        <begin position="111"/>
        <end position="116"/>
    </location>
    <ligand>
        <name>dCTP</name>
        <dbReference type="ChEBI" id="CHEBI:61481"/>
    </ligand>
</feature>
<feature type="binding site" evidence="1">
    <location>
        <begin position="135"/>
        <end position="137"/>
    </location>
    <ligand>
        <name>dCTP</name>
        <dbReference type="ChEBI" id="CHEBI:61481"/>
    </ligand>
</feature>
<feature type="binding site" evidence="1">
    <location>
        <position position="156"/>
    </location>
    <ligand>
        <name>dCTP</name>
        <dbReference type="ChEBI" id="CHEBI:61481"/>
    </ligand>
</feature>
<feature type="binding site" evidence="1">
    <location>
        <position position="170"/>
    </location>
    <ligand>
        <name>dCTP</name>
        <dbReference type="ChEBI" id="CHEBI:61481"/>
    </ligand>
</feature>
<feature type="binding site" evidence="1">
    <location>
        <position position="180"/>
    </location>
    <ligand>
        <name>dCTP</name>
        <dbReference type="ChEBI" id="CHEBI:61481"/>
    </ligand>
</feature>
<keyword id="KW-0378">Hydrolase</keyword>
<keyword id="KW-0546">Nucleotide metabolism</keyword>
<keyword id="KW-0547">Nucleotide-binding</keyword>
<organism>
    <name type="scientific">Francisella philomiragia subsp. philomiragia (strain ATCC 25017 / CCUG 19701 / FSC 153 / O#319-036)</name>
    <dbReference type="NCBI Taxonomy" id="484022"/>
    <lineage>
        <taxon>Bacteria</taxon>
        <taxon>Pseudomonadati</taxon>
        <taxon>Pseudomonadota</taxon>
        <taxon>Gammaproteobacteria</taxon>
        <taxon>Thiotrichales</taxon>
        <taxon>Francisellaceae</taxon>
        <taxon>Francisella</taxon>
    </lineage>
</organism>
<gene>
    <name evidence="1" type="primary">dcd</name>
    <name type="ordered locus">Fphi_1739</name>
</gene>
<accession>B0U0D4</accession>